<name>RL18_HUMAN</name>
<accession>Q07020</accession>
<accession>F8VWC5</accession>
<accession>Q8WTZ6</accession>
<comment type="function">
    <text evidence="4 5 6 8 11">Component of the large ribosomal subunit (PubMed:12962325, PubMed:23636399, PubMed:25901680, PubMed:25957688, PubMed:32669547). The ribosome is a large ribonucleoprotein complex responsible for the synthesis of proteins in the cell (PubMed:12962325, PubMed:23636399, PubMed:25901680, PubMed:25957688, PubMed:32669547).</text>
</comment>
<comment type="subunit">
    <text evidence="4 5 6 8 11">Component of the large ribosomal subunit (PubMed:12962325, PubMed:23636399, PubMed:25901680, PubMed:25957688, PubMed:32669547).</text>
</comment>
<comment type="interaction">
    <interactant intactId="EBI-352694">
        <id>Q07020</id>
    </interactant>
    <interactant intactId="EBI-930964">
        <id>P54253</id>
        <label>ATXN1</label>
    </interactant>
    <organismsDiffer>false</organismsDiffer>
    <experiments>3</experiments>
</comment>
<comment type="interaction">
    <interactant intactId="EBI-352694">
        <id>Q07020</id>
    </interactant>
    <interactant intactId="EBI-466029">
        <id>P42858</id>
        <label>HTT</label>
    </interactant>
    <organismsDiffer>false</organismsDiffer>
    <experiments>12</experiments>
</comment>
<comment type="interaction">
    <interactant intactId="EBI-352694">
        <id>Q07020</id>
    </interactant>
    <interactant intactId="EBI-348313">
        <id>P36578</id>
        <label>RPL4</label>
    </interactant>
    <organismsDiffer>false</organismsDiffer>
    <experiments>3</experiments>
</comment>
<comment type="subcellular location">
    <subcellularLocation>
        <location evidence="6">Cytoplasm</location>
        <location evidence="6">Cytosol</location>
    </subcellularLocation>
    <subcellularLocation>
        <location evidence="12 13">Cytoplasm</location>
    </subcellularLocation>
    <subcellularLocation>
        <location evidence="1">Rough endoplasmic reticulum</location>
    </subcellularLocation>
    <text evidence="1 6">Detected on cytosolic polysomes (PubMed:25957688). Detected in ribosomes that are associated with the rough endoplasmic reticulum (By similarity).</text>
</comment>
<comment type="alternative products">
    <event type="alternative splicing"/>
    <isoform>
        <id>Q07020-1</id>
        <name>1</name>
        <sequence type="displayed"/>
    </isoform>
    <isoform>
        <id>Q07020-2</id>
        <name>2</name>
        <sequence type="described" ref="VSP_055170"/>
    </isoform>
</comment>
<comment type="disease" evidence="7">
    <disease id="DI-05472">
        <name>Diamond-Blackfan anemia 18</name>
        <acronym>DBA18</acronym>
        <description>A form of Diamond-Blackfan anemia, a congenital non-regenerative hypoplastic anemia that usually presents early in infancy. Diamond-Blackfan anemia is characterized by a moderate to severe macrocytic anemia, erythroblastopenia, and an increased risk of malignancy. 30 to 40% of Diamond-Blackfan anemia patients present with short stature and congenital anomalies, the most frequent being craniofacial (Pierre-Robin syndrome and cleft palate), thumb and urogenital anomalies. DBA18 inheritance is autosomal dominant.</description>
        <dbReference type="MIM" id="618310"/>
    </disease>
    <text>The disease may be caused by variants affecting the gene represented in this entry.</text>
</comment>
<comment type="similarity">
    <text evidence="10">Belongs to the eukaryotic ribosomal protein eL18 family.</text>
</comment>
<evidence type="ECO:0000250" key="1">
    <source>
        <dbReference type="UniProtKB" id="Q95342"/>
    </source>
</evidence>
<evidence type="ECO:0000256" key="2">
    <source>
        <dbReference type="SAM" id="MobiDB-lite"/>
    </source>
</evidence>
<evidence type="ECO:0000269" key="3">
    <source>
    </source>
</evidence>
<evidence type="ECO:0000269" key="4">
    <source>
    </source>
</evidence>
<evidence type="ECO:0000269" key="5">
    <source>
    </source>
</evidence>
<evidence type="ECO:0000269" key="6">
    <source>
    </source>
</evidence>
<evidence type="ECO:0000269" key="7">
    <source>
    </source>
</evidence>
<evidence type="ECO:0000269" key="8">
    <source>
    </source>
</evidence>
<evidence type="ECO:0000303" key="9">
    <source>
    </source>
</evidence>
<evidence type="ECO:0000305" key="10"/>
<evidence type="ECO:0000305" key="11">
    <source>
    </source>
</evidence>
<evidence type="ECO:0000305" key="12">
    <source>
    </source>
</evidence>
<evidence type="ECO:0000305" key="13">
    <source>
    </source>
</evidence>
<evidence type="ECO:0007744" key="14">
    <source>
        <dbReference type="PDB" id="4UG0"/>
    </source>
</evidence>
<evidence type="ECO:0007744" key="15">
    <source>
        <dbReference type="PDB" id="5AJ0"/>
    </source>
</evidence>
<evidence type="ECO:0007744" key="16">
    <source>
        <dbReference type="PDB" id="6LQM"/>
    </source>
</evidence>
<evidence type="ECO:0007744" key="17">
    <source>
        <dbReference type="PDB" id="6LSR"/>
    </source>
</evidence>
<evidence type="ECO:0007744" key="18">
    <source>
        <dbReference type="PDB" id="6LSS"/>
    </source>
</evidence>
<evidence type="ECO:0007744" key="19">
    <source>
        <dbReference type="PDB" id="6LU8"/>
    </source>
</evidence>
<evidence type="ECO:0007744" key="20">
    <source>
    </source>
</evidence>
<evidence type="ECO:0007744" key="21">
    <source>
    </source>
</evidence>
<evidence type="ECO:0007744" key="22">
    <source>
    </source>
</evidence>
<evidence type="ECO:0007744" key="23">
    <source>
    </source>
</evidence>
<evidence type="ECO:0007744" key="24">
    <source>
    </source>
</evidence>
<evidence type="ECO:0007744" key="25">
    <source>
    </source>
</evidence>
<evidence type="ECO:0007744" key="26">
    <source>
    </source>
</evidence>
<dbReference type="EMBL" id="L11566">
    <property type="protein sequence ID" value="AAA16329.1"/>
    <property type="molecule type" value="mRNA"/>
</dbReference>
<dbReference type="EMBL" id="AB061825">
    <property type="protein sequence ID" value="BAB79463.1"/>
    <property type="molecule type" value="Genomic_DNA"/>
</dbReference>
<dbReference type="EMBL" id="AC022154">
    <property type="status" value="NOT_ANNOTATED_CDS"/>
    <property type="molecule type" value="Genomic_DNA"/>
</dbReference>
<dbReference type="EMBL" id="BC000374">
    <property type="protein sequence ID" value="AAH00374.1"/>
    <property type="molecule type" value="mRNA"/>
</dbReference>
<dbReference type="EMBL" id="BC009708">
    <property type="protein sequence ID" value="AAH09708.1"/>
    <property type="molecule type" value="mRNA"/>
</dbReference>
<dbReference type="EMBL" id="BC021743">
    <property type="protein sequence ID" value="AAH21743.1"/>
    <property type="molecule type" value="mRNA"/>
</dbReference>
<dbReference type="CCDS" id="CCDS12726.1">
    <molecule id="Q07020-1"/>
</dbReference>
<dbReference type="CCDS" id="CCDS58669.1">
    <molecule id="Q07020-2"/>
</dbReference>
<dbReference type="PIR" id="S38352">
    <property type="entry name" value="S38352"/>
</dbReference>
<dbReference type="RefSeq" id="NP_000970.1">
    <molecule id="Q07020-1"/>
    <property type="nucleotide sequence ID" value="NM_000979.4"/>
</dbReference>
<dbReference type="RefSeq" id="NP_001257419.1">
    <molecule id="Q07020-2"/>
    <property type="nucleotide sequence ID" value="NM_001270490.2"/>
</dbReference>
<dbReference type="PDB" id="4UG0">
    <property type="method" value="EM"/>
    <property type="chains" value="LQ=1-188"/>
</dbReference>
<dbReference type="PDB" id="4V6X">
    <property type="method" value="EM"/>
    <property type="resolution" value="5.00 A"/>
    <property type="chains" value="CQ=1-188"/>
</dbReference>
<dbReference type="PDB" id="5AJ0">
    <property type="method" value="EM"/>
    <property type="resolution" value="3.50 A"/>
    <property type="chains" value="AQ=1-188"/>
</dbReference>
<dbReference type="PDB" id="5LKS">
    <property type="method" value="EM"/>
    <property type="resolution" value="3.60 A"/>
    <property type="chains" value="LQ=1-188"/>
</dbReference>
<dbReference type="PDB" id="5T2C">
    <property type="method" value="EM"/>
    <property type="resolution" value="3.60 A"/>
    <property type="chains" value="K=1-188"/>
</dbReference>
<dbReference type="PDB" id="6IP5">
    <property type="method" value="EM"/>
    <property type="resolution" value="3.90 A"/>
    <property type="chains" value="2K=1-188"/>
</dbReference>
<dbReference type="PDB" id="6IP6">
    <property type="method" value="EM"/>
    <property type="resolution" value="4.50 A"/>
    <property type="chains" value="2K=1-188"/>
</dbReference>
<dbReference type="PDB" id="6IP8">
    <property type="method" value="EM"/>
    <property type="resolution" value="3.90 A"/>
    <property type="chains" value="2K=1-188"/>
</dbReference>
<dbReference type="PDB" id="6LQM">
    <property type="method" value="EM"/>
    <property type="resolution" value="3.09 A"/>
    <property type="chains" value="Z=1-188"/>
</dbReference>
<dbReference type="PDB" id="6LSR">
    <property type="method" value="EM"/>
    <property type="resolution" value="3.13 A"/>
    <property type="chains" value="Z=1-188"/>
</dbReference>
<dbReference type="PDB" id="6LSS">
    <property type="method" value="EM"/>
    <property type="resolution" value="3.23 A"/>
    <property type="chains" value="Z=1-188"/>
</dbReference>
<dbReference type="PDB" id="6LU8">
    <property type="method" value="EM"/>
    <property type="resolution" value="3.13 A"/>
    <property type="chains" value="Z=1-188"/>
</dbReference>
<dbReference type="PDB" id="6OLE">
    <property type="method" value="EM"/>
    <property type="resolution" value="3.10 A"/>
    <property type="chains" value="R=2-188"/>
</dbReference>
<dbReference type="PDB" id="6OLF">
    <property type="method" value="EM"/>
    <property type="resolution" value="3.90 A"/>
    <property type="chains" value="R=2-188"/>
</dbReference>
<dbReference type="PDB" id="6OLG">
    <property type="method" value="EM"/>
    <property type="resolution" value="3.40 A"/>
    <property type="chains" value="AQ=2-188"/>
</dbReference>
<dbReference type="PDB" id="6OLI">
    <property type="method" value="EM"/>
    <property type="resolution" value="3.50 A"/>
    <property type="chains" value="R=2-188"/>
</dbReference>
<dbReference type="PDB" id="6OLZ">
    <property type="method" value="EM"/>
    <property type="resolution" value="3.90 A"/>
    <property type="chains" value="AQ=2-188"/>
</dbReference>
<dbReference type="PDB" id="6OM0">
    <property type="method" value="EM"/>
    <property type="resolution" value="3.10 A"/>
    <property type="chains" value="R=2-188"/>
</dbReference>
<dbReference type="PDB" id="6OM7">
    <property type="method" value="EM"/>
    <property type="resolution" value="3.70 A"/>
    <property type="chains" value="R=2-188"/>
</dbReference>
<dbReference type="PDB" id="6QZP">
    <property type="method" value="EM"/>
    <property type="resolution" value="2.90 A"/>
    <property type="chains" value="LQ=2-188"/>
</dbReference>
<dbReference type="PDB" id="6W6L">
    <property type="method" value="EM"/>
    <property type="resolution" value="3.84 A"/>
    <property type="chains" value="R=1-188"/>
</dbReference>
<dbReference type="PDB" id="6XA1">
    <property type="method" value="EM"/>
    <property type="resolution" value="2.80 A"/>
    <property type="chains" value="LQ=2-188"/>
</dbReference>
<dbReference type="PDB" id="6Y0G">
    <property type="method" value="EM"/>
    <property type="resolution" value="3.20 A"/>
    <property type="chains" value="LQ=1-188"/>
</dbReference>
<dbReference type="PDB" id="6Y2L">
    <property type="method" value="EM"/>
    <property type="resolution" value="3.00 A"/>
    <property type="chains" value="LQ=1-188"/>
</dbReference>
<dbReference type="PDB" id="6Y57">
    <property type="method" value="EM"/>
    <property type="resolution" value="3.50 A"/>
    <property type="chains" value="LQ=1-188"/>
</dbReference>
<dbReference type="PDB" id="6Y6X">
    <property type="method" value="EM"/>
    <property type="resolution" value="2.80 A"/>
    <property type="chains" value="LQ=2-188"/>
</dbReference>
<dbReference type="PDB" id="6Z6L">
    <property type="method" value="EM"/>
    <property type="resolution" value="3.00 A"/>
    <property type="chains" value="LQ=1-188"/>
</dbReference>
<dbReference type="PDB" id="6Z6M">
    <property type="method" value="EM"/>
    <property type="resolution" value="3.10 A"/>
    <property type="chains" value="LQ=1-188"/>
</dbReference>
<dbReference type="PDB" id="6Z6N">
    <property type="method" value="EM"/>
    <property type="resolution" value="2.90 A"/>
    <property type="chains" value="LQ=1-188"/>
</dbReference>
<dbReference type="PDB" id="6ZM7">
    <property type="method" value="EM"/>
    <property type="resolution" value="2.70 A"/>
    <property type="chains" value="LQ=1-188"/>
</dbReference>
<dbReference type="PDB" id="6ZME">
    <property type="method" value="EM"/>
    <property type="resolution" value="3.00 A"/>
    <property type="chains" value="LQ=1-188"/>
</dbReference>
<dbReference type="PDB" id="6ZMI">
    <property type="method" value="EM"/>
    <property type="resolution" value="2.60 A"/>
    <property type="chains" value="LQ=1-188"/>
</dbReference>
<dbReference type="PDB" id="6ZMO">
    <property type="method" value="EM"/>
    <property type="resolution" value="3.10 A"/>
    <property type="chains" value="LQ=1-188"/>
</dbReference>
<dbReference type="PDB" id="6ZVK">
    <property type="method" value="EM"/>
    <property type="resolution" value="3.49 A"/>
    <property type="chains" value="S2=2-188"/>
</dbReference>
<dbReference type="PDB" id="7A01">
    <property type="method" value="EM"/>
    <property type="resolution" value="3.60 A"/>
    <property type="chains" value="S2=2-188"/>
</dbReference>
<dbReference type="PDB" id="7BHP">
    <property type="method" value="EM"/>
    <property type="resolution" value="3.30 A"/>
    <property type="chains" value="LQ=1-188"/>
</dbReference>
<dbReference type="PDB" id="7F5S">
    <property type="method" value="EM"/>
    <property type="resolution" value="2.72 A"/>
    <property type="chains" value="LQ=1-188"/>
</dbReference>
<dbReference type="PDB" id="7OW7">
    <property type="method" value="EM"/>
    <property type="resolution" value="2.20 A"/>
    <property type="chains" value="K=1-188"/>
</dbReference>
<dbReference type="PDB" id="7QVP">
    <property type="method" value="EM"/>
    <property type="resolution" value="3.00 A"/>
    <property type="chains" value="LQ/MQ=1-188"/>
</dbReference>
<dbReference type="PDB" id="7XNX">
    <property type="method" value="EM"/>
    <property type="resolution" value="2.70 A"/>
    <property type="chains" value="LQ=1-188"/>
</dbReference>
<dbReference type="PDB" id="7XNY">
    <property type="method" value="EM"/>
    <property type="resolution" value="2.50 A"/>
    <property type="chains" value="LQ=1-188"/>
</dbReference>
<dbReference type="PDB" id="8A3D">
    <property type="method" value="EM"/>
    <property type="resolution" value="1.67 A"/>
    <property type="chains" value="K=1-188"/>
</dbReference>
<dbReference type="PDB" id="8FKP">
    <property type="method" value="EM"/>
    <property type="resolution" value="2.85 A"/>
    <property type="chains" value="LB=1-188"/>
</dbReference>
<dbReference type="PDB" id="8FKQ">
    <property type="method" value="EM"/>
    <property type="resolution" value="2.76 A"/>
    <property type="chains" value="LB=1-188"/>
</dbReference>
<dbReference type="PDB" id="8FKR">
    <property type="method" value="EM"/>
    <property type="resolution" value="2.89 A"/>
    <property type="chains" value="LB=1-188"/>
</dbReference>
<dbReference type="PDB" id="8FKS">
    <property type="method" value="EM"/>
    <property type="resolution" value="2.88 A"/>
    <property type="chains" value="LB=1-188"/>
</dbReference>
<dbReference type="PDB" id="8FKT">
    <property type="method" value="EM"/>
    <property type="resolution" value="2.81 A"/>
    <property type="chains" value="LB=1-188"/>
</dbReference>
<dbReference type="PDB" id="8FKU">
    <property type="method" value="EM"/>
    <property type="resolution" value="2.82 A"/>
    <property type="chains" value="LB=1-188"/>
</dbReference>
<dbReference type="PDB" id="8FKV">
    <property type="method" value="EM"/>
    <property type="resolution" value="2.47 A"/>
    <property type="chains" value="LB=1-188"/>
</dbReference>
<dbReference type="PDB" id="8FKW">
    <property type="method" value="EM"/>
    <property type="resolution" value="2.50 A"/>
    <property type="chains" value="LB=1-188"/>
</dbReference>
<dbReference type="PDB" id="8FKX">
    <property type="method" value="EM"/>
    <property type="resolution" value="2.59 A"/>
    <property type="chains" value="LB=1-188"/>
</dbReference>
<dbReference type="PDB" id="8FKY">
    <property type="method" value="EM"/>
    <property type="resolution" value="2.67 A"/>
    <property type="chains" value="LB=1-188"/>
</dbReference>
<dbReference type="PDB" id="8FKZ">
    <property type="method" value="EM"/>
    <property type="resolution" value="3.04 A"/>
    <property type="chains" value="LB=1-188"/>
</dbReference>
<dbReference type="PDB" id="8FL0">
    <property type="method" value="EM"/>
    <property type="resolution" value="2.91 A"/>
    <property type="chains" value="LB=1-188"/>
</dbReference>
<dbReference type="PDB" id="8FL2">
    <property type="method" value="EM"/>
    <property type="resolution" value="2.67 A"/>
    <property type="chains" value="LB=1-188"/>
</dbReference>
<dbReference type="PDB" id="8FL3">
    <property type="method" value="EM"/>
    <property type="resolution" value="2.53 A"/>
    <property type="chains" value="LB=1-188"/>
</dbReference>
<dbReference type="PDB" id="8FL4">
    <property type="method" value="EM"/>
    <property type="resolution" value="2.89 A"/>
    <property type="chains" value="LB=1-188"/>
</dbReference>
<dbReference type="PDB" id="8FL6">
    <property type="method" value="EM"/>
    <property type="resolution" value="2.62 A"/>
    <property type="chains" value="LB=1-188"/>
</dbReference>
<dbReference type="PDB" id="8FL7">
    <property type="method" value="EM"/>
    <property type="resolution" value="2.55 A"/>
    <property type="chains" value="LB=1-188"/>
</dbReference>
<dbReference type="PDB" id="8FL9">
    <property type="method" value="EM"/>
    <property type="resolution" value="2.75 A"/>
    <property type="chains" value="LB=1-188"/>
</dbReference>
<dbReference type="PDB" id="8FLA">
    <property type="method" value="EM"/>
    <property type="resolution" value="2.63 A"/>
    <property type="chains" value="LB=1-188"/>
</dbReference>
<dbReference type="PDB" id="8FLB">
    <property type="method" value="EM"/>
    <property type="resolution" value="2.55 A"/>
    <property type="chains" value="LB=1-188"/>
</dbReference>
<dbReference type="PDB" id="8FLC">
    <property type="method" value="EM"/>
    <property type="resolution" value="2.76 A"/>
    <property type="chains" value="LB=1-188"/>
</dbReference>
<dbReference type="PDB" id="8FLD">
    <property type="method" value="EM"/>
    <property type="resolution" value="2.58 A"/>
    <property type="chains" value="LB=1-188"/>
</dbReference>
<dbReference type="PDB" id="8FLE">
    <property type="method" value="EM"/>
    <property type="resolution" value="2.48 A"/>
    <property type="chains" value="LB=1-188"/>
</dbReference>
<dbReference type="PDB" id="8FLF">
    <property type="method" value="EM"/>
    <property type="resolution" value="2.65 A"/>
    <property type="chains" value="LB=1-188"/>
</dbReference>
<dbReference type="PDB" id="8G5Y">
    <property type="method" value="EM"/>
    <property type="resolution" value="2.29 A"/>
    <property type="chains" value="LQ=1-188"/>
</dbReference>
<dbReference type="PDB" id="8G5Z">
    <property type="method" value="EM"/>
    <property type="resolution" value="2.64 A"/>
    <property type="chains" value="LQ=2-188"/>
</dbReference>
<dbReference type="PDB" id="8G60">
    <property type="method" value="EM"/>
    <property type="resolution" value="2.54 A"/>
    <property type="chains" value="LQ=1-188"/>
</dbReference>
<dbReference type="PDB" id="8G61">
    <property type="method" value="EM"/>
    <property type="resolution" value="2.94 A"/>
    <property type="chains" value="LQ=1-188"/>
</dbReference>
<dbReference type="PDB" id="8G6J">
    <property type="method" value="EM"/>
    <property type="resolution" value="2.80 A"/>
    <property type="chains" value="LQ=1-188"/>
</dbReference>
<dbReference type="PDB" id="8GLP">
    <property type="method" value="EM"/>
    <property type="resolution" value="1.67 A"/>
    <property type="chains" value="LQ=1-188"/>
</dbReference>
<dbReference type="PDB" id="8IDT">
    <property type="method" value="EM"/>
    <property type="resolution" value="2.80 A"/>
    <property type="chains" value="Z=1-188"/>
</dbReference>
<dbReference type="PDB" id="8IDY">
    <property type="method" value="EM"/>
    <property type="resolution" value="3.00 A"/>
    <property type="chains" value="Z=1-188"/>
</dbReference>
<dbReference type="PDB" id="8IE3">
    <property type="method" value="EM"/>
    <property type="resolution" value="3.30 A"/>
    <property type="chains" value="Z=1-188"/>
</dbReference>
<dbReference type="PDB" id="8IFD">
    <property type="method" value="EM"/>
    <property type="resolution" value="2.59 A"/>
    <property type="chains" value="2K=1-188"/>
</dbReference>
<dbReference type="PDB" id="8IFE">
    <property type="method" value="EM"/>
    <property type="resolution" value="2.57 A"/>
    <property type="chains" value="2K=1-188"/>
</dbReference>
<dbReference type="PDB" id="8INE">
    <property type="method" value="EM"/>
    <property type="resolution" value="3.20 A"/>
    <property type="chains" value="Z=1-188"/>
</dbReference>
<dbReference type="PDB" id="8INF">
    <property type="method" value="EM"/>
    <property type="resolution" value="3.00 A"/>
    <property type="chains" value="Z=1-188"/>
</dbReference>
<dbReference type="PDB" id="8INK">
    <property type="method" value="EM"/>
    <property type="resolution" value="3.20 A"/>
    <property type="chains" value="Z=1-188"/>
</dbReference>
<dbReference type="PDB" id="8IPD">
    <property type="method" value="EM"/>
    <property type="resolution" value="3.20 A"/>
    <property type="chains" value="Z=1-188"/>
</dbReference>
<dbReference type="PDB" id="8IPX">
    <property type="method" value="EM"/>
    <property type="resolution" value="4.30 A"/>
    <property type="chains" value="Z=1-188"/>
</dbReference>
<dbReference type="PDB" id="8IPY">
    <property type="method" value="EM"/>
    <property type="resolution" value="3.20 A"/>
    <property type="chains" value="Z=1-188"/>
</dbReference>
<dbReference type="PDB" id="8IR1">
    <property type="method" value="EM"/>
    <property type="resolution" value="3.30 A"/>
    <property type="chains" value="Z=1-188"/>
</dbReference>
<dbReference type="PDB" id="8IR3">
    <property type="method" value="EM"/>
    <property type="resolution" value="3.50 A"/>
    <property type="chains" value="Z=1-188"/>
</dbReference>
<dbReference type="PDB" id="8JDJ">
    <property type="method" value="EM"/>
    <property type="resolution" value="2.50 A"/>
    <property type="chains" value="V=1-188"/>
</dbReference>
<dbReference type="PDB" id="8JDK">
    <property type="method" value="EM"/>
    <property type="resolution" value="2.26 A"/>
    <property type="chains" value="V=1-188"/>
</dbReference>
<dbReference type="PDB" id="8JDL">
    <property type="method" value="EM"/>
    <property type="resolution" value="2.42 A"/>
    <property type="chains" value="V=1-188"/>
</dbReference>
<dbReference type="PDB" id="8JDM">
    <property type="method" value="EM"/>
    <property type="resolution" value="2.67 A"/>
    <property type="chains" value="V=1-188"/>
</dbReference>
<dbReference type="PDB" id="8K2C">
    <property type="method" value="EM"/>
    <property type="resolution" value="2.40 A"/>
    <property type="chains" value="LQ=1-188"/>
</dbReference>
<dbReference type="PDB" id="8OHD">
    <property type="method" value="EM"/>
    <property type="resolution" value="3.10 A"/>
    <property type="chains" value="LQ=1-188"/>
</dbReference>
<dbReference type="PDB" id="8OJ0">
    <property type="method" value="EM"/>
    <property type="resolution" value="3.30 A"/>
    <property type="chains" value="LQ=1-188"/>
</dbReference>
<dbReference type="PDB" id="8OJ5">
    <property type="method" value="EM"/>
    <property type="resolution" value="2.90 A"/>
    <property type="chains" value="LQ=1-188"/>
</dbReference>
<dbReference type="PDB" id="8OJ8">
    <property type="method" value="EM"/>
    <property type="resolution" value="3.30 A"/>
    <property type="chains" value="LQ=1-188"/>
</dbReference>
<dbReference type="PDB" id="8QFD">
    <property type="method" value="EM"/>
    <property type="resolution" value="2.20 A"/>
    <property type="chains" value="Q=1-188"/>
</dbReference>
<dbReference type="PDB" id="8QOI">
    <property type="method" value="EM"/>
    <property type="resolution" value="1.90 A"/>
    <property type="chains" value="LQ=1-188"/>
</dbReference>
<dbReference type="PDB" id="8QYX">
    <property type="method" value="EM"/>
    <property type="resolution" value="1.78 A"/>
    <property type="chains" value="K1=1-188"/>
</dbReference>
<dbReference type="PDB" id="8RL2">
    <property type="method" value="EM"/>
    <property type="resolution" value="2.84 A"/>
    <property type="chains" value="LQ=1-188"/>
</dbReference>
<dbReference type="PDB" id="8UKB">
    <property type="method" value="EM"/>
    <property type="resolution" value="3.05 A"/>
    <property type="chains" value="LQ=2-188"/>
</dbReference>
<dbReference type="PDB" id="8XSX">
    <property type="method" value="EM"/>
    <property type="resolution" value="2.40 A"/>
    <property type="chains" value="LQ=1-188"/>
</dbReference>
<dbReference type="PDB" id="8XSY">
    <property type="method" value="EM"/>
    <property type="resolution" value="3.00 A"/>
    <property type="chains" value="LQ=1-188"/>
</dbReference>
<dbReference type="PDB" id="8XSZ">
    <property type="method" value="EM"/>
    <property type="resolution" value="3.20 A"/>
    <property type="chains" value="LQ=1-188"/>
</dbReference>
<dbReference type="PDB" id="8Y0W">
    <property type="method" value="EM"/>
    <property type="resolution" value="3.40 A"/>
    <property type="chains" value="LQ=1-188"/>
</dbReference>
<dbReference type="PDB" id="8Y0X">
    <property type="method" value="EM"/>
    <property type="resolution" value="3.30 A"/>
    <property type="chains" value="LQ=1-188"/>
</dbReference>
<dbReference type="PDB" id="8YOO">
    <property type="method" value="EM"/>
    <property type="resolution" value="2.00 A"/>
    <property type="chains" value="LQ=1-188"/>
</dbReference>
<dbReference type="PDB" id="8YOP">
    <property type="method" value="EM"/>
    <property type="resolution" value="2.20 A"/>
    <property type="chains" value="LQ=1-188"/>
</dbReference>
<dbReference type="PDB" id="9C3H">
    <property type="method" value="EM"/>
    <property type="resolution" value="2.00 A"/>
    <property type="chains" value="Lj=1-188"/>
</dbReference>
<dbReference type="PDB" id="9G8M">
    <property type="method" value="EM"/>
    <property type="resolution" value="3.30 A"/>
    <property type="chains" value="LQ=1-188"/>
</dbReference>
<dbReference type="PDB" id="9GMO">
    <property type="method" value="EM"/>
    <property type="resolution" value="2.59 A"/>
    <property type="chains" value="K=1-188"/>
</dbReference>
<dbReference type="PDBsum" id="4UG0"/>
<dbReference type="PDBsum" id="4V6X"/>
<dbReference type="PDBsum" id="5AJ0"/>
<dbReference type="PDBsum" id="5LKS"/>
<dbReference type="PDBsum" id="5T2C"/>
<dbReference type="PDBsum" id="6IP5"/>
<dbReference type="PDBsum" id="6IP6"/>
<dbReference type="PDBsum" id="6IP8"/>
<dbReference type="PDBsum" id="6LQM"/>
<dbReference type="PDBsum" id="6LSR"/>
<dbReference type="PDBsum" id="6LSS"/>
<dbReference type="PDBsum" id="6LU8"/>
<dbReference type="PDBsum" id="6OLE"/>
<dbReference type="PDBsum" id="6OLF"/>
<dbReference type="PDBsum" id="6OLG"/>
<dbReference type="PDBsum" id="6OLI"/>
<dbReference type="PDBsum" id="6OLZ"/>
<dbReference type="PDBsum" id="6OM0"/>
<dbReference type="PDBsum" id="6OM7"/>
<dbReference type="PDBsum" id="6QZP"/>
<dbReference type="PDBsum" id="6W6L"/>
<dbReference type="PDBsum" id="6XA1"/>
<dbReference type="PDBsum" id="6Y0G"/>
<dbReference type="PDBsum" id="6Y2L"/>
<dbReference type="PDBsum" id="6Y57"/>
<dbReference type="PDBsum" id="6Y6X"/>
<dbReference type="PDBsum" id="6Z6L"/>
<dbReference type="PDBsum" id="6Z6M"/>
<dbReference type="PDBsum" id="6Z6N"/>
<dbReference type="PDBsum" id="6ZM7"/>
<dbReference type="PDBsum" id="6ZME"/>
<dbReference type="PDBsum" id="6ZMI"/>
<dbReference type="PDBsum" id="6ZMO"/>
<dbReference type="PDBsum" id="6ZVK"/>
<dbReference type="PDBsum" id="7A01"/>
<dbReference type="PDBsum" id="7BHP"/>
<dbReference type="PDBsum" id="7F5S"/>
<dbReference type="PDBsum" id="7OW7"/>
<dbReference type="PDBsum" id="7QVP"/>
<dbReference type="PDBsum" id="7XNX"/>
<dbReference type="PDBsum" id="7XNY"/>
<dbReference type="PDBsum" id="8A3D"/>
<dbReference type="PDBsum" id="8FKP"/>
<dbReference type="PDBsum" id="8FKQ"/>
<dbReference type="PDBsum" id="8FKR"/>
<dbReference type="PDBsum" id="8FKS"/>
<dbReference type="PDBsum" id="8FKT"/>
<dbReference type="PDBsum" id="8FKU"/>
<dbReference type="PDBsum" id="8FKV"/>
<dbReference type="PDBsum" id="8FKW"/>
<dbReference type="PDBsum" id="8FKX"/>
<dbReference type="PDBsum" id="8FKY"/>
<dbReference type="PDBsum" id="8FKZ"/>
<dbReference type="PDBsum" id="8FL0"/>
<dbReference type="PDBsum" id="8FL2"/>
<dbReference type="PDBsum" id="8FL3"/>
<dbReference type="PDBsum" id="8FL4"/>
<dbReference type="PDBsum" id="8FL6"/>
<dbReference type="PDBsum" id="8FL7"/>
<dbReference type="PDBsum" id="8FL9"/>
<dbReference type="PDBsum" id="8FLA"/>
<dbReference type="PDBsum" id="8FLB"/>
<dbReference type="PDBsum" id="8FLC"/>
<dbReference type="PDBsum" id="8FLD"/>
<dbReference type="PDBsum" id="8FLE"/>
<dbReference type="PDBsum" id="8FLF"/>
<dbReference type="PDBsum" id="8G5Y"/>
<dbReference type="PDBsum" id="8G5Z"/>
<dbReference type="PDBsum" id="8G60"/>
<dbReference type="PDBsum" id="8G61"/>
<dbReference type="PDBsum" id="8G6J"/>
<dbReference type="PDBsum" id="8GLP"/>
<dbReference type="PDBsum" id="8IDT"/>
<dbReference type="PDBsum" id="8IDY"/>
<dbReference type="PDBsum" id="8IE3"/>
<dbReference type="PDBsum" id="8IFD"/>
<dbReference type="PDBsum" id="8IFE"/>
<dbReference type="PDBsum" id="8INE"/>
<dbReference type="PDBsum" id="8INF"/>
<dbReference type="PDBsum" id="8INK"/>
<dbReference type="PDBsum" id="8IPD"/>
<dbReference type="PDBsum" id="8IPX"/>
<dbReference type="PDBsum" id="8IPY"/>
<dbReference type="PDBsum" id="8IR1"/>
<dbReference type="PDBsum" id="8IR3"/>
<dbReference type="PDBsum" id="8JDJ"/>
<dbReference type="PDBsum" id="8JDK"/>
<dbReference type="PDBsum" id="8JDL"/>
<dbReference type="PDBsum" id="8JDM"/>
<dbReference type="PDBsum" id="8K2C"/>
<dbReference type="PDBsum" id="8OHD"/>
<dbReference type="PDBsum" id="8OJ0"/>
<dbReference type="PDBsum" id="8OJ5"/>
<dbReference type="PDBsum" id="8OJ8"/>
<dbReference type="PDBsum" id="8QFD"/>
<dbReference type="PDBsum" id="8QOI"/>
<dbReference type="PDBsum" id="8QYX"/>
<dbReference type="PDBsum" id="8RL2"/>
<dbReference type="PDBsum" id="8UKB"/>
<dbReference type="PDBsum" id="8XSX"/>
<dbReference type="PDBsum" id="8XSY"/>
<dbReference type="PDBsum" id="8XSZ"/>
<dbReference type="PDBsum" id="8Y0W"/>
<dbReference type="PDBsum" id="8Y0X"/>
<dbReference type="PDBsum" id="8YOO"/>
<dbReference type="PDBsum" id="8YOP"/>
<dbReference type="PDBsum" id="9C3H"/>
<dbReference type="PDBsum" id="9G8M"/>
<dbReference type="PDBsum" id="9GMO"/>
<dbReference type="EMDB" id="EMD-0948"/>
<dbReference type="EMDB" id="EMD-0963"/>
<dbReference type="EMDB" id="EMD-0964"/>
<dbReference type="EMDB" id="EMD-0978"/>
<dbReference type="EMDB" id="EMD-10668"/>
<dbReference type="EMDB" id="EMD-10674"/>
<dbReference type="EMDB" id="EMD-10690"/>
<dbReference type="EMDB" id="EMD-10709"/>
<dbReference type="EMDB" id="EMD-11098"/>
<dbReference type="EMDB" id="EMD-11099"/>
<dbReference type="EMDB" id="EMD-11100"/>
<dbReference type="EMDB" id="EMD-11288"/>
<dbReference type="EMDB" id="EMD-11289"/>
<dbReference type="EMDB" id="EMD-11292"/>
<dbReference type="EMDB" id="EMD-11299"/>
<dbReference type="EMDB" id="EMD-11459"/>
<dbReference type="EMDB" id="EMD-11590"/>
<dbReference type="EMDB" id="EMD-12189"/>
<dbReference type="EMDB" id="EMD-13094"/>
<dbReference type="EMDB" id="EMD-14181"/>
<dbReference type="EMDB" id="EMD-15113"/>
<dbReference type="EMDB" id="EMD-16880"/>
<dbReference type="EMDB" id="EMD-16902"/>
<dbReference type="EMDB" id="EMD-16905"/>
<dbReference type="EMDB" id="EMD-16908"/>
<dbReference type="EMDB" id="EMD-18382"/>
<dbReference type="EMDB" id="EMD-18539"/>
<dbReference type="EMDB" id="EMD-18765"/>
<dbReference type="EMDB" id="EMD-19330"/>
<dbReference type="EMDB" id="EMD-29252"/>
<dbReference type="EMDB" id="EMD-29253"/>
<dbReference type="EMDB" id="EMD-29254"/>
<dbReference type="EMDB" id="EMD-29255"/>
<dbReference type="EMDB" id="EMD-29256"/>
<dbReference type="EMDB" id="EMD-29257"/>
<dbReference type="EMDB" id="EMD-29258"/>
<dbReference type="EMDB" id="EMD-29259"/>
<dbReference type="EMDB" id="EMD-29260"/>
<dbReference type="EMDB" id="EMD-29261"/>
<dbReference type="EMDB" id="EMD-29262"/>
<dbReference type="EMDB" id="EMD-29263"/>
<dbReference type="EMDB" id="EMD-29265"/>
<dbReference type="EMDB" id="EMD-29266"/>
<dbReference type="EMDB" id="EMD-29267"/>
<dbReference type="EMDB" id="EMD-29268"/>
<dbReference type="EMDB" id="EMD-29269"/>
<dbReference type="EMDB" id="EMD-29271"/>
<dbReference type="EMDB" id="EMD-29272"/>
<dbReference type="EMDB" id="EMD-29273"/>
<dbReference type="EMDB" id="EMD-29274"/>
<dbReference type="EMDB" id="EMD-29275"/>
<dbReference type="EMDB" id="EMD-29276"/>
<dbReference type="EMDB" id="EMD-29277"/>
<dbReference type="EMDB" id="EMD-29757"/>
<dbReference type="EMDB" id="EMD-29758"/>
<dbReference type="EMDB" id="EMD-29759"/>
<dbReference type="EMDB" id="EMD-29760"/>
<dbReference type="EMDB" id="EMD-29771"/>
<dbReference type="EMDB" id="EMD-31465"/>
<dbReference type="EMDB" id="EMD-33329"/>
<dbReference type="EMDB" id="EMD-33330"/>
<dbReference type="EMDB" id="EMD-35370"/>
<dbReference type="EMDB" id="EMD-35371"/>
<dbReference type="EMDB" id="EMD-35375"/>
<dbReference type="EMDB" id="EMD-35413"/>
<dbReference type="EMDB" id="EMD-35414"/>
<dbReference type="EMDB" id="EMD-35596"/>
<dbReference type="EMDB" id="EMD-35597"/>
<dbReference type="EMDB" id="EMD-35599"/>
<dbReference type="EMDB" id="EMD-35639"/>
<dbReference type="EMDB" id="EMD-35649"/>
<dbReference type="EMDB" id="EMD-35651"/>
<dbReference type="EMDB" id="EMD-35672"/>
<dbReference type="EMDB" id="EMD-35673"/>
<dbReference type="EMDB" id="EMD-36178"/>
<dbReference type="EMDB" id="EMD-36179"/>
<dbReference type="EMDB" id="EMD-36180"/>
<dbReference type="EMDB" id="EMD-36181"/>
<dbReference type="EMDB" id="EMD-36838"/>
<dbReference type="EMDB" id="EMD-38629"/>
<dbReference type="EMDB" id="EMD-38630"/>
<dbReference type="EMDB" id="EMD-38631"/>
<dbReference type="EMDB" id="EMD-3883"/>
<dbReference type="EMDB" id="EMD-39455"/>
<dbReference type="EMDB" id="EMD-39456"/>
<dbReference type="EMDB" id="EMD-40205"/>
<dbReference type="EMDB" id="EMD-4070"/>
<dbReference type="EMDB" id="EMD-42351"/>
<dbReference type="EMDB" id="EMD-45170"/>
<dbReference type="EMDB" id="EMD-51132"/>
<dbReference type="EMDB" id="EMD-51452"/>
<dbReference type="EMDB" id="EMD-9701"/>
<dbReference type="EMDB" id="EMD-9702"/>
<dbReference type="EMDB" id="EMD-9703"/>
<dbReference type="SMR" id="Q07020"/>
<dbReference type="BioGRID" id="112061">
    <property type="interactions" value="531"/>
</dbReference>
<dbReference type="ComplexPortal" id="CPX-5183">
    <property type="entry name" value="60S cytosolic large ribosomal subunit"/>
</dbReference>
<dbReference type="ComplexPortal" id="CPX-7664">
    <property type="entry name" value="60S cytosolic large ribosomal subunit, testis-specific variant"/>
</dbReference>
<dbReference type="ComplexPortal" id="CPX-7665">
    <property type="entry name" value="60S cytosolic large ribosomal subunit, striated muscle variant"/>
</dbReference>
<dbReference type="CORUM" id="Q07020"/>
<dbReference type="FunCoup" id="Q07020">
    <property type="interactions" value="1944"/>
</dbReference>
<dbReference type="IntAct" id="Q07020">
    <property type="interactions" value="273"/>
</dbReference>
<dbReference type="MINT" id="Q07020"/>
<dbReference type="STRING" id="9606.ENSP00000447001"/>
<dbReference type="DrugBank" id="DB11638">
    <property type="generic name" value="Artenimol"/>
</dbReference>
<dbReference type="GlyGen" id="Q07020">
    <property type="glycosylation" value="4 sites, 1 N-linked glycan (1 site), 1 O-linked glycan (3 sites)"/>
</dbReference>
<dbReference type="iPTMnet" id="Q07020"/>
<dbReference type="PhosphoSitePlus" id="Q07020"/>
<dbReference type="SwissPalm" id="Q07020"/>
<dbReference type="BioMuta" id="RPL18"/>
<dbReference type="CPTAC" id="CPTAC-432"/>
<dbReference type="CPTAC" id="CPTAC-433"/>
<dbReference type="jPOST" id="Q07020"/>
<dbReference type="MassIVE" id="Q07020"/>
<dbReference type="PaxDb" id="9606-ENSP00000447001"/>
<dbReference type="PeptideAtlas" id="Q07020"/>
<dbReference type="PRIDE" id="Q07020"/>
<dbReference type="ProteomicsDB" id="28967"/>
<dbReference type="ProteomicsDB" id="58499">
    <molecule id="Q07020-1"/>
</dbReference>
<dbReference type="Pumba" id="Q07020"/>
<dbReference type="TopDownProteomics" id="Q07020-1">
    <molecule id="Q07020-1"/>
</dbReference>
<dbReference type="Antibodypedia" id="31739">
    <property type="antibodies" value="197 antibodies from 29 providers"/>
</dbReference>
<dbReference type="DNASU" id="6141"/>
<dbReference type="Ensembl" id="ENST00000549920.6">
    <molecule id="Q07020-1"/>
    <property type="protein sequence ID" value="ENSP00000447001.1"/>
    <property type="gene ID" value="ENSG00000063177.13"/>
</dbReference>
<dbReference type="Ensembl" id="ENST00000552588.5">
    <molecule id="Q07020-2"/>
    <property type="protein sequence ID" value="ENSP00000449204.1"/>
    <property type="gene ID" value="ENSG00000063177.13"/>
</dbReference>
<dbReference type="GeneID" id="6141"/>
<dbReference type="KEGG" id="hsa:6141"/>
<dbReference type="MANE-Select" id="ENST00000549920.6">
    <property type="protein sequence ID" value="ENSP00000447001.1"/>
    <property type="RefSeq nucleotide sequence ID" value="NM_000979.4"/>
    <property type="RefSeq protein sequence ID" value="NP_000970.1"/>
</dbReference>
<dbReference type="UCSC" id="uc002pjq.3">
    <molecule id="Q07020-1"/>
    <property type="organism name" value="human"/>
</dbReference>
<dbReference type="AGR" id="HGNC:10310"/>
<dbReference type="CTD" id="6141"/>
<dbReference type="DisGeNET" id="6141"/>
<dbReference type="GeneCards" id="RPL18"/>
<dbReference type="GeneReviews" id="RPL18"/>
<dbReference type="HGNC" id="HGNC:10310">
    <property type="gene designation" value="RPL18"/>
</dbReference>
<dbReference type="HPA" id="ENSG00000063177">
    <property type="expression patterns" value="Low tissue specificity"/>
</dbReference>
<dbReference type="MalaCards" id="RPL18"/>
<dbReference type="MIM" id="604179">
    <property type="type" value="gene"/>
</dbReference>
<dbReference type="MIM" id="618310">
    <property type="type" value="phenotype"/>
</dbReference>
<dbReference type="neXtProt" id="NX_Q07020"/>
<dbReference type="OpenTargets" id="ENSG00000063177"/>
<dbReference type="Orphanet" id="124">
    <property type="disease" value="Diamond-Blackfan anemia"/>
</dbReference>
<dbReference type="PharmGKB" id="PA34679"/>
<dbReference type="VEuPathDB" id="HostDB:ENSG00000063177"/>
<dbReference type="eggNOG" id="KOG1714">
    <property type="taxonomic scope" value="Eukaryota"/>
</dbReference>
<dbReference type="GeneTree" id="ENSGT00390000012976"/>
<dbReference type="InParanoid" id="Q07020"/>
<dbReference type="OMA" id="IDICHKN"/>
<dbReference type="OrthoDB" id="6353017at2759"/>
<dbReference type="PAN-GO" id="Q07020">
    <property type="GO annotations" value="3 GO annotations based on evolutionary models"/>
</dbReference>
<dbReference type="PhylomeDB" id="Q07020"/>
<dbReference type="TreeFam" id="TF300202"/>
<dbReference type="PathwayCommons" id="Q07020"/>
<dbReference type="Reactome" id="R-HSA-156827">
    <property type="pathway name" value="L13a-mediated translational silencing of Ceruloplasmin expression"/>
</dbReference>
<dbReference type="Reactome" id="R-HSA-156902">
    <property type="pathway name" value="Peptide chain elongation"/>
</dbReference>
<dbReference type="Reactome" id="R-HSA-1799339">
    <property type="pathway name" value="SRP-dependent cotranslational protein targeting to membrane"/>
</dbReference>
<dbReference type="Reactome" id="R-HSA-192823">
    <property type="pathway name" value="Viral mRNA Translation"/>
</dbReference>
<dbReference type="Reactome" id="R-HSA-2408557">
    <property type="pathway name" value="Selenocysteine synthesis"/>
</dbReference>
<dbReference type="Reactome" id="R-HSA-6791226">
    <property type="pathway name" value="Major pathway of rRNA processing in the nucleolus and cytosol"/>
</dbReference>
<dbReference type="Reactome" id="R-HSA-72689">
    <property type="pathway name" value="Formation of a pool of free 40S subunits"/>
</dbReference>
<dbReference type="Reactome" id="R-HSA-72706">
    <property type="pathway name" value="GTP hydrolysis and joining of the 60S ribosomal subunit"/>
</dbReference>
<dbReference type="Reactome" id="R-HSA-72764">
    <property type="pathway name" value="Eukaryotic Translation Termination"/>
</dbReference>
<dbReference type="Reactome" id="R-HSA-9010553">
    <property type="pathway name" value="Regulation of expression of SLITs and ROBOs"/>
</dbReference>
<dbReference type="Reactome" id="R-HSA-9633012">
    <property type="pathway name" value="Response of EIF2AK4 (GCN2) to amino acid deficiency"/>
</dbReference>
<dbReference type="Reactome" id="R-HSA-975956">
    <property type="pathway name" value="Nonsense Mediated Decay (NMD) independent of the Exon Junction Complex (EJC)"/>
</dbReference>
<dbReference type="Reactome" id="R-HSA-975957">
    <property type="pathway name" value="Nonsense Mediated Decay (NMD) enhanced by the Exon Junction Complex (EJC)"/>
</dbReference>
<dbReference type="SignaLink" id="Q07020"/>
<dbReference type="SIGNOR" id="Q07020"/>
<dbReference type="BioGRID-ORCS" id="6141">
    <property type="hits" value="843 hits in 1162 CRISPR screens"/>
</dbReference>
<dbReference type="CD-CODE" id="91857CE7">
    <property type="entry name" value="Nucleolus"/>
</dbReference>
<dbReference type="ChiTaRS" id="RPL18">
    <property type="organism name" value="human"/>
</dbReference>
<dbReference type="GeneWiki" id="RPL18"/>
<dbReference type="GenomeRNAi" id="6141"/>
<dbReference type="Pharos" id="Q07020">
    <property type="development level" value="Tbio"/>
</dbReference>
<dbReference type="PRO" id="PR:Q07020"/>
<dbReference type="Proteomes" id="UP000005640">
    <property type="component" value="Chromosome 19"/>
</dbReference>
<dbReference type="RNAct" id="Q07020">
    <property type="molecule type" value="protein"/>
</dbReference>
<dbReference type="Bgee" id="ENSG00000063177">
    <property type="expression patterns" value="Expressed in nipple and 217 other cell types or tissues"/>
</dbReference>
<dbReference type="ExpressionAtlas" id="Q07020">
    <property type="expression patterns" value="baseline and differential"/>
</dbReference>
<dbReference type="GO" id="GO:0005737">
    <property type="term" value="C:cytoplasm"/>
    <property type="evidence" value="ECO:0000303"/>
    <property type="project" value="ComplexPortal"/>
</dbReference>
<dbReference type="GO" id="GO:0005829">
    <property type="term" value="C:cytosol"/>
    <property type="evidence" value="ECO:0000314"/>
    <property type="project" value="HPA"/>
</dbReference>
<dbReference type="GO" id="GO:0022625">
    <property type="term" value="C:cytosolic large ribosomal subunit"/>
    <property type="evidence" value="ECO:0000314"/>
    <property type="project" value="UniProtKB"/>
</dbReference>
<dbReference type="GO" id="GO:0022626">
    <property type="term" value="C:cytosolic ribosome"/>
    <property type="evidence" value="ECO:0000314"/>
    <property type="project" value="FlyBase"/>
</dbReference>
<dbReference type="GO" id="GO:0005783">
    <property type="term" value="C:endoplasmic reticulum"/>
    <property type="evidence" value="ECO:0000314"/>
    <property type="project" value="HPA"/>
</dbReference>
<dbReference type="GO" id="GO:0005925">
    <property type="term" value="C:focal adhesion"/>
    <property type="evidence" value="ECO:0007005"/>
    <property type="project" value="UniProtKB"/>
</dbReference>
<dbReference type="GO" id="GO:0016020">
    <property type="term" value="C:membrane"/>
    <property type="evidence" value="ECO:0007005"/>
    <property type="project" value="UniProtKB"/>
</dbReference>
<dbReference type="GO" id="GO:0005730">
    <property type="term" value="C:nucleolus"/>
    <property type="evidence" value="ECO:0000314"/>
    <property type="project" value="HPA"/>
</dbReference>
<dbReference type="GO" id="GO:0005634">
    <property type="term" value="C:nucleus"/>
    <property type="evidence" value="ECO:0007005"/>
    <property type="project" value="UniProtKB"/>
</dbReference>
<dbReference type="GO" id="GO:0005791">
    <property type="term" value="C:rough endoplasmic reticulum"/>
    <property type="evidence" value="ECO:0007669"/>
    <property type="project" value="UniProtKB-SubCell"/>
</dbReference>
<dbReference type="GO" id="GO:0003723">
    <property type="term" value="F:RNA binding"/>
    <property type="evidence" value="ECO:0000318"/>
    <property type="project" value="GO_Central"/>
</dbReference>
<dbReference type="GO" id="GO:0003735">
    <property type="term" value="F:structural constituent of ribosome"/>
    <property type="evidence" value="ECO:0000314"/>
    <property type="project" value="UniProtKB"/>
</dbReference>
<dbReference type="GO" id="GO:0002181">
    <property type="term" value="P:cytoplasmic translation"/>
    <property type="evidence" value="ECO:0000314"/>
    <property type="project" value="UniProtKB"/>
</dbReference>
<dbReference type="GO" id="GO:0006412">
    <property type="term" value="P:translation"/>
    <property type="evidence" value="ECO:0000304"/>
    <property type="project" value="ProtInc"/>
</dbReference>
<dbReference type="FunFam" id="3.100.10.10:FF:000001">
    <property type="entry name" value="60S ribosomal protein L18"/>
    <property type="match status" value="1"/>
</dbReference>
<dbReference type="Gene3D" id="3.100.10.10">
    <property type="match status" value="1"/>
</dbReference>
<dbReference type="InterPro" id="IPR000039">
    <property type="entry name" value="Ribosomal_eL18"/>
</dbReference>
<dbReference type="InterPro" id="IPR021132">
    <property type="entry name" value="Ribosomal_eL18/eL18-A/B/_CS"/>
</dbReference>
<dbReference type="InterPro" id="IPR021131">
    <property type="entry name" value="Ribosomal_uL15/eL18"/>
</dbReference>
<dbReference type="InterPro" id="IPR036227">
    <property type="entry name" value="Ribosomal_uL15/eL18_sf"/>
</dbReference>
<dbReference type="PANTHER" id="PTHR10934">
    <property type="entry name" value="60S RIBOSOMAL PROTEIN L18"/>
    <property type="match status" value="1"/>
</dbReference>
<dbReference type="PANTHER" id="PTHR10934:SF2">
    <property type="entry name" value="LARGE RIBOSOMAL SUBUNIT PROTEIN EL18"/>
    <property type="match status" value="1"/>
</dbReference>
<dbReference type="Pfam" id="PF17135">
    <property type="entry name" value="Ribosomal_L18"/>
    <property type="match status" value="1"/>
</dbReference>
<dbReference type="SUPFAM" id="SSF52080">
    <property type="entry name" value="Ribosomal proteins L15p and L18e"/>
    <property type="match status" value="1"/>
</dbReference>
<dbReference type="PROSITE" id="PS01106">
    <property type="entry name" value="RIBOSOMAL_L18E"/>
    <property type="match status" value="1"/>
</dbReference>
<protein>
    <recommendedName>
        <fullName evidence="9">Large ribosomal subunit protein eL18</fullName>
    </recommendedName>
    <alternativeName>
        <fullName>60S ribosomal protein L18</fullName>
    </alternativeName>
</protein>
<gene>
    <name type="primary">RPL18</name>
</gene>
<reference key="1">
    <citation type="journal article" date="1993" name="Biochim. Biophys. Acta">
        <title>Nucleotide and deduced amino acid sequence of human ribosomal protein L18.</title>
        <authorList>
            <person name="Puder M."/>
            <person name="Barnard G.F."/>
            <person name="Staniunas R.J."/>
            <person name="Steele G.D. Jr."/>
            <person name="Chen L.B."/>
        </authorList>
    </citation>
    <scope>NUCLEOTIDE SEQUENCE [MRNA] (ISOFORM 1)</scope>
    <source>
        <tissue>Colon</tissue>
    </source>
</reference>
<reference key="2">
    <citation type="journal article" date="2002" name="Genome Res.">
        <title>The human ribosomal protein genes: sequencing and comparative analysis of 73 genes.</title>
        <authorList>
            <person name="Yoshihama M."/>
            <person name="Uechi T."/>
            <person name="Asakawa S."/>
            <person name="Kawasaki K."/>
            <person name="Kato S."/>
            <person name="Higa S."/>
            <person name="Maeda N."/>
            <person name="Minoshima S."/>
            <person name="Tanaka T."/>
            <person name="Shimizu N."/>
            <person name="Kenmochi N."/>
        </authorList>
    </citation>
    <scope>NUCLEOTIDE SEQUENCE [GENOMIC DNA] (ISOFORM 1)</scope>
</reference>
<reference key="3">
    <citation type="journal article" date="2004" name="Nature">
        <title>The DNA sequence and biology of human chromosome 19.</title>
        <authorList>
            <person name="Grimwood J."/>
            <person name="Gordon L.A."/>
            <person name="Olsen A.S."/>
            <person name="Terry A."/>
            <person name="Schmutz J."/>
            <person name="Lamerdin J.E."/>
            <person name="Hellsten U."/>
            <person name="Goodstein D."/>
            <person name="Couronne O."/>
            <person name="Tran-Gyamfi M."/>
            <person name="Aerts A."/>
            <person name="Altherr M."/>
            <person name="Ashworth L."/>
            <person name="Bajorek E."/>
            <person name="Black S."/>
            <person name="Branscomb E."/>
            <person name="Caenepeel S."/>
            <person name="Carrano A.V."/>
            <person name="Caoile C."/>
            <person name="Chan Y.M."/>
            <person name="Christensen M."/>
            <person name="Cleland C.A."/>
            <person name="Copeland A."/>
            <person name="Dalin E."/>
            <person name="Dehal P."/>
            <person name="Denys M."/>
            <person name="Detter J.C."/>
            <person name="Escobar J."/>
            <person name="Flowers D."/>
            <person name="Fotopulos D."/>
            <person name="Garcia C."/>
            <person name="Georgescu A.M."/>
            <person name="Glavina T."/>
            <person name="Gomez M."/>
            <person name="Gonzales E."/>
            <person name="Groza M."/>
            <person name="Hammon N."/>
            <person name="Hawkins T."/>
            <person name="Haydu L."/>
            <person name="Ho I."/>
            <person name="Huang W."/>
            <person name="Israni S."/>
            <person name="Jett J."/>
            <person name="Kadner K."/>
            <person name="Kimball H."/>
            <person name="Kobayashi A."/>
            <person name="Larionov V."/>
            <person name="Leem S.-H."/>
            <person name="Lopez F."/>
            <person name="Lou Y."/>
            <person name="Lowry S."/>
            <person name="Malfatti S."/>
            <person name="Martinez D."/>
            <person name="McCready P.M."/>
            <person name="Medina C."/>
            <person name="Morgan J."/>
            <person name="Nelson K."/>
            <person name="Nolan M."/>
            <person name="Ovcharenko I."/>
            <person name="Pitluck S."/>
            <person name="Pollard M."/>
            <person name="Popkie A.P."/>
            <person name="Predki P."/>
            <person name="Quan G."/>
            <person name="Ramirez L."/>
            <person name="Rash S."/>
            <person name="Retterer J."/>
            <person name="Rodriguez A."/>
            <person name="Rogers S."/>
            <person name="Salamov A."/>
            <person name="Salazar A."/>
            <person name="She X."/>
            <person name="Smith D."/>
            <person name="Slezak T."/>
            <person name="Solovyev V."/>
            <person name="Thayer N."/>
            <person name="Tice H."/>
            <person name="Tsai M."/>
            <person name="Ustaszewska A."/>
            <person name="Vo N."/>
            <person name="Wagner M."/>
            <person name="Wheeler J."/>
            <person name="Wu K."/>
            <person name="Xie G."/>
            <person name="Yang J."/>
            <person name="Dubchak I."/>
            <person name="Furey T.S."/>
            <person name="DeJong P."/>
            <person name="Dickson M."/>
            <person name="Gordon D."/>
            <person name="Eichler E.E."/>
            <person name="Pennacchio L.A."/>
            <person name="Richardson P."/>
            <person name="Stubbs L."/>
            <person name="Rokhsar D.S."/>
            <person name="Myers R.M."/>
            <person name="Rubin E.M."/>
            <person name="Lucas S.M."/>
        </authorList>
    </citation>
    <scope>NUCLEOTIDE SEQUENCE [LARGE SCALE GENOMIC DNA]</scope>
</reference>
<reference key="4">
    <citation type="journal article" date="2004" name="Genome Res.">
        <title>The status, quality, and expansion of the NIH full-length cDNA project: the Mammalian Gene Collection (MGC).</title>
        <authorList>
            <consortium name="The MGC Project Team"/>
        </authorList>
    </citation>
    <scope>NUCLEOTIDE SEQUENCE [LARGE SCALE MRNA] (ISOFORM 1)</scope>
    <source>
        <tissue>Brain</tissue>
        <tissue>Lung</tissue>
    </source>
</reference>
<reference key="5">
    <citation type="journal article" date="2003" name="J. Protein Chem.">
        <title>Characterization and analysis of posttranslational modifications of the human large cytoplasmic ribosomal subunit proteins by mass spectrometry and Edman sequencing.</title>
        <authorList>
            <person name="Odintsova T.I."/>
            <person name="Muller E.C."/>
            <person name="Ivanov A.V."/>
            <person name="Egorov T.A."/>
            <person name="Bienert R."/>
            <person name="Vladimirov S.N."/>
            <person name="Kostka S."/>
            <person name="Otto A."/>
            <person name="Wittmann-Liebold B."/>
            <person name="Karpova G.G."/>
        </authorList>
    </citation>
    <scope>PROTEIN SEQUENCE OF 2-14</scope>
    <scope>IDENTIFICATION BY MASS SPECTROMETRY</scope>
    <scope>FUNCTION</scope>
    <scope>SUBUNIT</scope>
</reference>
<reference key="6">
    <citation type="journal article" date="2003" name="Nature">
        <title>Proteomic characterization of the human centrosome by protein correlation profiling.</title>
        <authorList>
            <person name="Andersen J.S."/>
            <person name="Wilkinson C.J."/>
            <person name="Mayor T."/>
            <person name="Mortensen P."/>
            <person name="Nigg E.A."/>
            <person name="Mann M."/>
        </authorList>
    </citation>
    <scope>IDENTIFICATION BY MASS SPECTROMETRY</scope>
    <source>
        <tissue>Lymphoblast</tissue>
    </source>
</reference>
<reference key="7">
    <citation type="journal article" date="2006" name="Nat. Biotechnol.">
        <title>A probability-based approach for high-throughput protein phosphorylation analysis and site localization.</title>
        <authorList>
            <person name="Beausoleil S.A."/>
            <person name="Villen J."/>
            <person name="Gerber S.A."/>
            <person name="Rush J."/>
            <person name="Gygi S.P."/>
        </authorList>
    </citation>
    <scope>PHOSPHORYLATION [LARGE SCALE ANALYSIS] AT SER-130</scope>
    <scope>IDENTIFICATION BY MASS SPECTROMETRY [LARGE SCALE ANALYSIS]</scope>
    <source>
        <tissue>Cervix carcinoma</tissue>
    </source>
</reference>
<reference key="8">
    <citation type="journal article" date="2008" name="Mol. Cell">
        <title>Kinase-selective enrichment enables quantitative phosphoproteomics of the kinome across the cell cycle.</title>
        <authorList>
            <person name="Daub H."/>
            <person name="Olsen J.V."/>
            <person name="Bairlein M."/>
            <person name="Gnad F."/>
            <person name="Oppermann F.S."/>
            <person name="Korner R."/>
            <person name="Greff Z."/>
            <person name="Keri G."/>
            <person name="Stemmann O."/>
            <person name="Mann M."/>
        </authorList>
    </citation>
    <scope>PHOSPHORYLATION [LARGE SCALE ANALYSIS] AT SER-130</scope>
    <scope>IDENTIFICATION BY MASS SPECTROMETRY [LARGE SCALE ANALYSIS]</scope>
    <source>
        <tissue>Cervix carcinoma</tissue>
    </source>
</reference>
<reference key="9">
    <citation type="journal article" date="2008" name="Proc. Natl. Acad. Sci. U.S.A.">
        <title>A quantitative atlas of mitotic phosphorylation.</title>
        <authorList>
            <person name="Dephoure N."/>
            <person name="Zhou C."/>
            <person name="Villen J."/>
            <person name="Beausoleil S.A."/>
            <person name="Bakalarski C.E."/>
            <person name="Elledge S.J."/>
            <person name="Gygi S.P."/>
        </authorList>
    </citation>
    <scope>PHOSPHORYLATION [LARGE SCALE ANALYSIS] AT SER-130 AND THR-158</scope>
    <scope>IDENTIFICATION BY MASS SPECTROMETRY [LARGE SCALE ANALYSIS]</scope>
    <source>
        <tissue>Cervix carcinoma</tissue>
    </source>
</reference>
<reference key="10">
    <citation type="journal article" date="2010" name="Sci. Signal.">
        <title>Quantitative phosphoproteomics reveals widespread full phosphorylation site occupancy during mitosis.</title>
        <authorList>
            <person name="Olsen J.V."/>
            <person name="Vermeulen M."/>
            <person name="Santamaria A."/>
            <person name="Kumar C."/>
            <person name="Miller M.L."/>
            <person name="Jensen L.J."/>
            <person name="Gnad F."/>
            <person name="Cox J."/>
            <person name="Jensen T.S."/>
            <person name="Nigg E.A."/>
            <person name="Brunak S."/>
            <person name="Mann M."/>
        </authorList>
    </citation>
    <scope>PHOSPHORYLATION [LARGE SCALE ANALYSIS] AT SER-130</scope>
    <scope>IDENTIFICATION BY MASS SPECTROMETRY [LARGE SCALE ANALYSIS]</scope>
    <source>
        <tissue>Cervix carcinoma</tissue>
    </source>
</reference>
<reference key="11">
    <citation type="journal article" date="2011" name="BMC Syst. Biol.">
        <title>Initial characterization of the human central proteome.</title>
        <authorList>
            <person name="Burkard T.R."/>
            <person name="Planyavsky M."/>
            <person name="Kaupe I."/>
            <person name="Breitwieser F.P."/>
            <person name="Buerckstuemmer T."/>
            <person name="Bennett K.L."/>
            <person name="Superti-Furga G."/>
            <person name="Colinge J."/>
        </authorList>
    </citation>
    <scope>IDENTIFICATION BY MASS SPECTROMETRY [LARGE SCALE ANALYSIS]</scope>
</reference>
<reference key="12">
    <citation type="journal article" date="2011" name="Sci. Signal.">
        <title>System-wide temporal characterization of the proteome and phosphoproteome of human embryonic stem cell differentiation.</title>
        <authorList>
            <person name="Rigbolt K.T."/>
            <person name="Prokhorova T.A."/>
            <person name="Akimov V."/>
            <person name="Henningsen J."/>
            <person name="Johansen P.T."/>
            <person name="Kratchmarova I."/>
            <person name="Kassem M."/>
            <person name="Mann M."/>
            <person name="Olsen J.V."/>
            <person name="Blagoev B."/>
        </authorList>
    </citation>
    <scope>PHOSPHORYLATION [LARGE SCALE ANALYSIS] AT SER-130</scope>
    <scope>IDENTIFICATION BY MASS SPECTROMETRY [LARGE SCALE ANALYSIS]</scope>
</reference>
<reference key="13">
    <citation type="journal article" date="2013" name="J. Proteome Res.">
        <title>Toward a comprehensive characterization of a human cancer cell phosphoproteome.</title>
        <authorList>
            <person name="Zhou H."/>
            <person name="Di Palma S."/>
            <person name="Preisinger C."/>
            <person name="Peng M."/>
            <person name="Polat A.N."/>
            <person name="Heck A.J."/>
            <person name="Mohammed S."/>
        </authorList>
    </citation>
    <scope>PHOSPHORYLATION [LARGE SCALE ANALYSIS] AT SER-130</scope>
    <scope>IDENTIFICATION BY MASS SPECTROMETRY [LARGE SCALE ANALYSIS]</scope>
    <source>
        <tissue>Cervix carcinoma</tissue>
        <tissue>Erythroleukemia</tissue>
    </source>
</reference>
<reference key="14">
    <citation type="journal article" date="2014" name="Curr. Opin. Struct. Biol.">
        <title>A new system for naming ribosomal proteins.</title>
        <authorList>
            <person name="Ban N."/>
            <person name="Beckmann R."/>
            <person name="Cate J.H.D."/>
            <person name="Dinman J.D."/>
            <person name="Dragon F."/>
            <person name="Ellis S.R."/>
            <person name="Lafontaine D.L.J."/>
            <person name="Lindahl L."/>
            <person name="Liljas A."/>
            <person name="Lipton J.M."/>
            <person name="McAlear M.A."/>
            <person name="Moore P.B."/>
            <person name="Noller H.F."/>
            <person name="Ortega J."/>
            <person name="Panse V.G."/>
            <person name="Ramakrishnan V."/>
            <person name="Spahn C.M.T."/>
            <person name="Steitz T.A."/>
            <person name="Tchorzewski M."/>
            <person name="Tollervey D."/>
            <person name="Warren A.J."/>
            <person name="Williamson J.R."/>
            <person name="Wilson D."/>
            <person name="Yonath A."/>
            <person name="Yusupov M."/>
        </authorList>
    </citation>
    <scope>NOMENCLATURE</scope>
</reference>
<reference key="15">
    <citation type="journal article" date="2014" name="J. Proteomics">
        <title>An enzyme assisted RP-RPLC approach for in-depth analysis of human liver phosphoproteome.</title>
        <authorList>
            <person name="Bian Y."/>
            <person name="Song C."/>
            <person name="Cheng K."/>
            <person name="Dong M."/>
            <person name="Wang F."/>
            <person name="Huang J."/>
            <person name="Sun D."/>
            <person name="Wang L."/>
            <person name="Ye M."/>
            <person name="Zou H."/>
        </authorList>
    </citation>
    <scope>IDENTIFICATION BY MASS SPECTROMETRY [LARGE SCALE ANALYSIS]</scope>
    <source>
        <tissue>Liver</tissue>
    </source>
</reference>
<reference key="16">
    <citation type="journal article" date="2015" name="Proteomics">
        <title>N-terminome analysis of the human mitochondrial proteome.</title>
        <authorList>
            <person name="Vaca Jacome A.S."/>
            <person name="Rabilloud T."/>
            <person name="Schaeffer-Reiss C."/>
            <person name="Rompais M."/>
            <person name="Ayoub D."/>
            <person name="Lane L."/>
            <person name="Bairoch A."/>
            <person name="Van Dorsselaer A."/>
            <person name="Carapito C."/>
        </authorList>
    </citation>
    <scope>IDENTIFICATION BY MASS SPECTROMETRY [LARGE SCALE ANALYSIS]</scope>
</reference>
<reference key="17">
    <citation type="journal article" date="2017" name="Nat. Struct. Mol. Biol.">
        <title>Site-specific mapping of the human SUMO proteome reveals co-modification with phosphorylation.</title>
        <authorList>
            <person name="Hendriks I.A."/>
            <person name="Lyon D."/>
            <person name="Young C."/>
            <person name="Jensen L.J."/>
            <person name="Vertegaal A.C."/>
            <person name="Nielsen M.L."/>
        </authorList>
    </citation>
    <scope>SUMOYLATION [LARGE SCALE ANALYSIS] AT LYS-119 AND LYS-164</scope>
    <scope>IDENTIFICATION BY MASS SPECTROMETRY [LARGE SCALE ANALYSIS]</scope>
</reference>
<reference key="18">
    <citation type="journal article" date="2013" name="Nature">
        <title>Structures of the human and Drosophila 80S ribosome.</title>
        <authorList>
            <person name="Anger A.M."/>
            <person name="Armache J.P."/>
            <person name="Berninghausen O."/>
            <person name="Habeck M."/>
            <person name="Subklewe M."/>
            <person name="Wilson D.N."/>
            <person name="Beckmann R."/>
        </authorList>
    </citation>
    <scope>STRUCTURE BY ELECTRON MICROSCOPY (5.0 ANGSTROMS)</scope>
    <scope>SUBCELLULAR LOCATION</scope>
    <scope>SUBUNIT</scope>
    <scope>FUNCTION</scope>
</reference>
<reference evidence="15" key="19">
    <citation type="journal article" date="2015" name="Cell">
        <title>Structural snapshots of actively translating human ribosomes.</title>
        <authorList>
            <person name="Behrmann E."/>
            <person name="Loerke J."/>
            <person name="Budkevich T.V."/>
            <person name="Yamamoto K."/>
            <person name="Schmidt A."/>
            <person name="Penczek P.A."/>
            <person name="Vos M.R."/>
            <person name="Burger J."/>
            <person name="Mielke T."/>
            <person name="Scheerer P."/>
            <person name="Spahn C.M."/>
        </authorList>
    </citation>
    <scope>STRUCTURE BY ELECTRON MICROSCOPY (3.50 ANGSTROMS)</scope>
</reference>
<reference evidence="14" key="20">
    <citation type="journal article" date="2015" name="Nature">
        <title>Structure of the human 80S ribosome.</title>
        <authorList>
            <person name="Khatter H."/>
            <person name="Myasnikov A.G."/>
            <person name="Natchiar S.K."/>
            <person name="Klaholz B.P."/>
        </authorList>
    </citation>
    <scope>STRUCTURE BY ELECTRON MICROSCOPY (3.60 ANGSTROMS)</scope>
</reference>
<reference evidence="16 17 18 19" key="21">
    <citation type="journal article" date="2020" name="Nat. Commun.">
        <title>Structural snapshots of human pre-60S ribosomal particles before and after nuclear export.</title>
        <authorList>
            <person name="Liang X."/>
            <person name="Zuo M.Q."/>
            <person name="Zhang Y."/>
            <person name="Li N."/>
            <person name="Ma C."/>
            <person name="Dong M.Q."/>
            <person name="Gao N."/>
        </authorList>
    </citation>
    <scope>STRUCTURE BY ELECTRON MICROSCOPY (3.09 ANGSTROMS)</scope>
    <scope>FUNCTION</scope>
    <scope>SUBUNIT</scope>
</reference>
<reference key="22">
    <citation type="journal article" date="2017" name="J. Med. Genet.">
        <title>Novel and known ribosomal causes of Diamond-Blackfan anaemia identified through comprehensive genomic characterisation.</title>
        <authorList>
            <person name="Mirabello L."/>
            <person name="Khincha P.P."/>
            <person name="Ellis S.R."/>
            <person name="Giri N."/>
            <person name="Brodie S."/>
            <person name="Chandrasekharappa S.C."/>
            <person name="Donovan F.X."/>
            <person name="Zhou W."/>
            <person name="Hicks B.D."/>
            <person name="Boland J.F."/>
            <person name="Yeager M."/>
            <person name="Jones K."/>
            <person name="Zhu B."/>
            <person name="Wang M."/>
            <person name="Alter B.P."/>
            <person name="Savage S.A."/>
        </authorList>
    </citation>
    <scope>VARIANT DBA18 SER-51</scope>
    <scope>INVOLVEMENT IN DBA18</scope>
</reference>
<feature type="initiator methionine" description="Removed" evidence="3">
    <location>
        <position position="1"/>
    </location>
</feature>
<feature type="chain" id="PRO_0000132769" description="Large ribosomal subunit protein eL18">
    <location>
        <begin position="2"/>
        <end position="188"/>
    </location>
</feature>
<feature type="region of interest" description="Disordered" evidence="2">
    <location>
        <begin position="151"/>
        <end position="188"/>
    </location>
</feature>
<feature type="compositionally biased region" description="Basic residues" evidence="2">
    <location>
        <begin position="161"/>
        <end position="171"/>
    </location>
</feature>
<feature type="compositionally biased region" description="Basic residues" evidence="2">
    <location>
        <begin position="178"/>
        <end position="188"/>
    </location>
</feature>
<feature type="modified residue" description="Phosphoserine" evidence="20 21 22 23 24 25">
    <location>
        <position position="130"/>
    </location>
</feature>
<feature type="modified residue" description="Phosphothreonine" evidence="21">
    <location>
        <position position="158"/>
    </location>
</feature>
<feature type="cross-link" description="Glycyl lysine isopeptide (Lys-Gly) (interchain with G-Cter in SUMO2)" evidence="26">
    <location>
        <position position="119"/>
    </location>
</feature>
<feature type="cross-link" description="Glycyl lysine isopeptide (Lys-Gly) (interchain with G-Cter in SUMO2)" evidence="26">
    <location>
        <position position="164"/>
    </location>
</feature>
<feature type="splice variant" id="VSP_055170" description="In isoform 2." evidence="10">
    <original>MGVDIRHNKDRKVRRKEPKSQDIYLRLLVK</original>
    <variation>M</variation>
    <location>
        <begin position="1"/>
        <end position="30"/>
    </location>
</feature>
<feature type="sequence variant" id="VAR_081935" description="In DBA18; uncertain significance; dbSNP:rs1568425218." evidence="7">
    <original>L</original>
    <variation>S</variation>
    <location>
        <position position="51"/>
    </location>
</feature>
<feature type="sequence conflict" description="In Ref. 4; AAH21743." evidence="10" ref="4">
    <original>S</original>
    <variation>C</variation>
    <location>
        <position position="62"/>
    </location>
</feature>
<sequence>MGVDIRHNKDRKVRRKEPKSQDIYLRLLVKLYRFLARRTNSTFNQVVLKRLFMSRTNRPPLSLSRMIRKMKLPGRENKTAVVVGTITDDVRVQEVPKLKVCALRVTSRARSRILRAGGKILTFDQLALDSPKGCGTVLLSGPRKGREVYRHFGKAPGTPHSHTKPYVRSKGRKFERARGRRASRGYKN</sequence>
<organism>
    <name type="scientific">Homo sapiens</name>
    <name type="common">Human</name>
    <dbReference type="NCBI Taxonomy" id="9606"/>
    <lineage>
        <taxon>Eukaryota</taxon>
        <taxon>Metazoa</taxon>
        <taxon>Chordata</taxon>
        <taxon>Craniata</taxon>
        <taxon>Vertebrata</taxon>
        <taxon>Euteleostomi</taxon>
        <taxon>Mammalia</taxon>
        <taxon>Eutheria</taxon>
        <taxon>Euarchontoglires</taxon>
        <taxon>Primates</taxon>
        <taxon>Haplorrhini</taxon>
        <taxon>Catarrhini</taxon>
        <taxon>Hominidae</taxon>
        <taxon>Homo</taxon>
    </lineage>
</organism>
<keyword id="KW-0002">3D-structure</keyword>
<keyword id="KW-0025">Alternative splicing</keyword>
<keyword id="KW-0963">Cytoplasm</keyword>
<keyword id="KW-1024">Diamond-Blackfan anemia</keyword>
<keyword id="KW-0903">Direct protein sequencing</keyword>
<keyword id="KW-0225">Disease variant</keyword>
<keyword id="KW-0256">Endoplasmic reticulum</keyword>
<keyword id="KW-1017">Isopeptide bond</keyword>
<keyword id="KW-0597">Phosphoprotein</keyword>
<keyword id="KW-1267">Proteomics identification</keyword>
<keyword id="KW-1185">Reference proteome</keyword>
<keyword id="KW-0687">Ribonucleoprotein</keyword>
<keyword id="KW-0689">Ribosomal protein</keyword>
<keyword id="KW-0832">Ubl conjugation</keyword>
<proteinExistence type="evidence at protein level"/>